<protein>
    <recommendedName>
        <fullName evidence="1">Succinate--CoA ligase [ADP-forming] subunit beta</fullName>
        <ecNumber evidence="1">6.2.1.5</ecNumber>
    </recommendedName>
    <alternativeName>
        <fullName evidence="1">Succinyl-CoA synthetase subunit beta</fullName>
        <shortName evidence="1">SCS-beta</shortName>
    </alternativeName>
</protein>
<evidence type="ECO:0000255" key="1">
    <source>
        <dbReference type="HAMAP-Rule" id="MF_00558"/>
    </source>
</evidence>
<dbReference type="EC" id="6.2.1.5" evidence="1"/>
<dbReference type="EMBL" id="CP001100">
    <property type="protein sequence ID" value="ACF14718.1"/>
    <property type="molecule type" value="Genomic_DNA"/>
</dbReference>
<dbReference type="RefSeq" id="WP_012500801.1">
    <property type="nucleotide sequence ID" value="NC_011026.1"/>
</dbReference>
<dbReference type="SMR" id="B3QWF8"/>
<dbReference type="STRING" id="517418.Ctha_2267"/>
<dbReference type="KEGG" id="cts:Ctha_2267"/>
<dbReference type="eggNOG" id="COG0045">
    <property type="taxonomic scope" value="Bacteria"/>
</dbReference>
<dbReference type="HOGENOM" id="CLU_037430_0_2_10"/>
<dbReference type="OrthoDB" id="9802602at2"/>
<dbReference type="UniPathway" id="UPA00223">
    <property type="reaction ID" value="UER00999"/>
</dbReference>
<dbReference type="Proteomes" id="UP000001208">
    <property type="component" value="Chromosome"/>
</dbReference>
<dbReference type="GO" id="GO:0005829">
    <property type="term" value="C:cytosol"/>
    <property type="evidence" value="ECO:0007669"/>
    <property type="project" value="TreeGrafter"/>
</dbReference>
<dbReference type="GO" id="GO:0042709">
    <property type="term" value="C:succinate-CoA ligase complex"/>
    <property type="evidence" value="ECO:0007669"/>
    <property type="project" value="TreeGrafter"/>
</dbReference>
<dbReference type="GO" id="GO:0005524">
    <property type="term" value="F:ATP binding"/>
    <property type="evidence" value="ECO:0007669"/>
    <property type="project" value="UniProtKB-UniRule"/>
</dbReference>
<dbReference type="GO" id="GO:0000287">
    <property type="term" value="F:magnesium ion binding"/>
    <property type="evidence" value="ECO:0007669"/>
    <property type="project" value="UniProtKB-UniRule"/>
</dbReference>
<dbReference type="GO" id="GO:0004775">
    <property type="term" value="F:succinate-CoA ligase (ADP-forming) activity"/>
    <property type="evidence" value="ECO:0007669"/>
    <property type="project" value="UniProtKB-UniRule"/>
</dbReference>
<dbReference type="GO" id="GO:0004776">
    <property type="term" value="F:succinate-CoA ligase (GDP-forming) activity"/>
    <property type="evidence" value="ECO:0007669"/>
    <property type="project" value="RHEA"/>
</dbReference>
<dbReference type="GO" id="GO:0006104">
    <property type="term" value="P:succinyl-CoA metabolic process"/>
    <property type="evidence" value="ECO:0007669"/>
    <property type="project" value="TreeGrafter"/>
</dbReference>
<dbReference type="GO" id="GO:0006099">
    <property type="term" value="P:tricarboxylic acid cycle"/>
    <property type="evidence" value="ECO:0007669"/>
    <property type="project" value="UniProtKB-UniRule"/>
</dbReference>
<dbReference type="FunFam" id="3.30.1490.20:FF:000002">
    <property type="entry name" value="Succinate--CoA ligase [ADP-forming] subunit beta"/>
    <property type="match status" value="1"/>
</dbReference>
<dbReference type="FunFam" id="3.30.470.20:FF:000002">
    <property type="entry name" value="Succinate--CoA ligase [ADP-forming] subunit beta"/>
    <property type="match status" value="1"/>
</dbReference>
<dbReference type="FunFam" id="3.40.50.261:FF:000001">
    <property type="entry name" value="Succinate--CoA ligase [ADP-forming] subunit beta"/>
    <property type="match status" value="1"/>
</dbReference>
<dbReference type="Gene3D" id="3.30.1490.20">
    <property type="entry name" value="ATP-grasp fold, A domain"/>
    <property type="match status" value="1"/>
</dbReference>
<dbReference type="Gene3D" id="3.30.470.20">
    <property type="entry name" value="ATP-grasp fold, B domain"/>
    <property type="match status" value="1"/>
</dbReference>
<dbReference type="Gene3D" id="3.40.50.261">
    <property type="entry name" value="Succinyl-CoA synthetase domains"/>
    <property type="match status" value="1"/>
</dbReference>
<dbReference type="HAMAP" id="MF_00558">
    <property type="entry name" value="Succ_CoA_beta"/>
    <property type="match status" value="1"/>
</dbReference>
<dbReference type="InterPro" id="IPR011761">
    <property type="entry name" value="ATP-grasp"/>
</dbReference>
<dbReference type="InterPro" id="IPR013650">
    <property type="entry name" value="ATP-grasp_succ-CoA_synth-type"/>
</dbReference>
<dbReference type="InterPro" id="IPR013815">
    <property type="entry name" value="ATP_grasp_subdomain_1"/>
</dbReference>
<dbReference type="InterPro" id="IPR017866">
    <property type="entry name" value="Succ-CoA_synthase_bsu_CS"/>
</dbReference>
<dbReference type="InterPro" id="IPR005811">
    <property type="entry name" value="SUCC_ACL_C"/>
</dbReference>
<dbReference type="InterPro" id="IPR005809">
    <property type="entry name" value="Succ_CoA_ligase-like_bsu"/>
</dbReference>
<dbReference type="InterPro" id="IPR016102">
    <property type="entry name" value="Succinyl-CoA_synth-like"/>
</dbReference>
<dbReference type="NCBIfam" id="NF001913">
    <property type="entry name" value="PRK00696.1"/>
    <property type="match status" value="1"/>
</dbReference>
<dbReference type="NCBIfam" id="TIGR01016">
    <property type="entry name" value="sucCoAbeta"/>
    <property type="match status" value="1"/>
</dbReference>
<dbReference type="PANTHER" id="PTHR11815:SF10">
    <property type="entry name" value="SUCCINATE--COA LIGASE [GDP-FORMING] SUBUNIT BETA, MITOCHONDRIAL"/>
    <property type="match status" value="1"/>
</dbReference>
<dbReference type="PANTHER" id="PTHR11815">
    <property type="entry name" value="SUCCINYL-COA SYNTHETASE BETA CHAIN"/>
    <property type="match status" value="1"/>
</dbReference>
<dbReference type="Pfam" id="PF08442">
    <property type="entry name" value="ATP-grasp_2"/>
    <property type="match status" value="1"/>
</dbReference>
<dbReference type="Pfam" id="PF00549">
    <property type="entry name" value="Ligase_CoA"/>
    <property type="match status" value="1"/>
</dbReference>
<dbReference type="PIRSF" id="PIRSF001554">
    <property type="entry name" value="SucCS_beta"/>
    <property type="match status" value="1"/>
</dbReference>
<dbReference type="SUPFAM" id="SSF56059">
    <property type="entry name" value="Glutathione synthetase ATP-binding domain-like"/>
    <property type="match status" value="1"/>
</dbReference>
<dbReference type="SUPFAM" id="SSF52210">
    <property type="entry name" value="Succinyl-CoA synthetase domains"/>
    <property type="match status" value="1"/>
</dbReference>
<dbReference type="PROSITE" id="PS50975">
    <property type="entry name" value="ATP_GRASP"/>
    <property type="match status" value="1"/>
</dbReference>
<dbReference type="PROSITE" id="PS01217">
    <property type="entry name" value="SUCCINYL_COA_LIG_3"/>
    <property type="match status" value="1"/>
</dbReference>
<name>SUCC_CHLT3</name>
<feature type="chain" id="PRO_1000129174" description="Succinate--CoA ligase [ADP-forming] subunit beta">
    <location>
        <begin position="1"/>
        <end position="392"/>
    </location>
</feature>
<feature type="domain" description="ATP-grasp" evidence="1">
    <location>
        <begin position="9"/>
        <end position="248"/>
    </location>
</feature>
<feature type="binding site" evidence="1">
    <location>
        <position position="50"/>
    </location>
    <ligand>
        <name>ATP</name>
        <dbReference type="ChEBI" id="CHEBI:30616"/>
    </ligand>
</feature>
<feature type="binding site" evidence="1">
    <location>
        <begin position="57"/>
        <end position="59"/>
    </location>
    <ligand>
        <name>ATP</name>
        <dbReference type="ChEBI" id="CHEBI:30616"/>
    </ligand>
</feature>
<feature type="binding site" evidence="1">
    <location>
        <position position="103"/>
    </location>
    <ligand>
        <name>ATP</name>
        <dbReference type="ChEBI" id="CHEBI:30616"/>
    </ligand>
</feature>
<feature type="binding site" evidence="1">
    <location>
        <position position="106"/>
    </location>
    <ligand>
        <name>ATP</name>
        <dbReference type="ChEBI" id="CHEBI:30616"/>
    </ligand>
</feature>
<feature type="binding site" evidence="1">
    <location>
        <position position="111"/>
    </location>
    <ligand>
        <name>ATP</name>
        <dbReference type="ChEBI" id="CHEBI:30616"/>
    </ligand>
</feature>
<feature type="binding site" evidence="1">
    <location>
        <position position="203"/>
    </location>
    <ligand>
        <name>Mg(2+)</name>
        <dbReference type="ChEBI" id="CHEBI:18420"/>
    </ligand>
</feature>
<feature type="binding site" evidence="1">
    <location>
        <position position="217"/>
    </location>
    <ligand>
        <name>Mg(2+)</name>
        <dbReference type="ChEBI" id="CHEBI:18420"/>
    </ligand>
</feature>
<feature type="binding site" evidence="1">
    <location>
        <position position="268"/>
    </location>
    <ligand>
        <name>substrate</name>
        <note>ligand shared with subunit alpha</note>
    </ligand>
</feature>
<feature type="binding site" evidence="1">
    <location>
        <begin position="325"/>
        <end position="327"/>
    </location>
    <ligand>
        <name>substrate</name>
        <note>ligand shared with subunit alpha</note>
    </ligand>
</feature>
<sequence>MNIHEYQGKEILRGFGVTVPKGIVAFSAEEAKKAAETLLTEQGGGVVVVKAQIHAGGRGKAGGVKLVRSADEAFEVATQMIGTTLVTHQTGPEGKEVRRLLVEEGMNIEKELYLGITLDRATSCNVLMVSTEGGMEIEKVAEETPEKLLKIQIHPTLGLQPNQAREAAFFLGLEGEQFKNAVKFISALYNAYMKADCSLAEINPLVVTKEGRVIALDAKINFDDNALFRHKDYIDLRDTSEEDPLEVEASKSNLNYVRLDGNVGCMVNGAGLAMGTMDMIQLAGGKPANFLDVGGGANPQTVQEGFRIILTDPNVKAILVNIFGGIVRCDRVAGGVIEAAKNIDIHVPVIVRLEGTNADIAQKMLDESGLNLVSAKGLSDAAKKVNEALAAA</sequence>
<reference key="1">
    <citation type="submission" date="2008-06" db="EMBL/GenBank/DDBJ databases">
        <title>Complete sequence of Chloroherpeton thalassium ATCC 35110.</title>
        <authorList>
            <consortium name="US DOE Joint Genome Institute"/>
            <person name="Lucas S."/>
            <person name="Copeland A."/>
            <person name="Lapidus A."/>
            <person name="Glavina del Rio T."/>
            <person name="Dalin E."/>
            <person name="Tice H."/>
            <person name="Bruce D."/>
            <person name="Goodwin L."/>
            <person name="Pitluck S."/>
            <person name="Schmutz J."/>
            <person name="Larimer F."/>
            <person name="Land M."/>
            <person name="Hauser L."/>
            <person name="Kyrpides N."/>
            <person name="Mikhailova N."/>
            <person name="Liu Z."/>
            <person name="Li T."/>
            <person name="Zhao F."/>
            <person name="Overmann J."/>
            <person name="Bryant D.A."/>
            <person name="Richardson P."/>
        </authorList>
    </citation>
    <scope>NUCLEOTIDE SEQUENCE [LARGE SCALE GENOMIC DNA]</scope>
    <source>
        <strain>ATCC 35110 / GB-78</strain>
    </source>
</reference>
<keyword id="KW-0067">ATP-binding</keyword>
<keyword id="KW-0436">Ligase</keyword>
<keyword id="KW-0460">Magnesium</keyword>
<keyword id="KW-0479">Metal-binding</keyword>
<keyword id="KW-0547">Nucleotide-binding</keyword>
<keyword id="KW-1185">Reference proteome</keyword>
<keyword id="KW-0816">Tricarboxylic acid cycle</keyword>
<organism>
    <name type="scientific">Chloroherpeton thalassium (strain ATCC 35110 / GB-78)</name>
    <dbReference type="NCBI Taxonomy" id="517418"/>
    <lineage>
        <taxon>Bacteria</taxon>
        <taxon>Pseudomonadati</taxon>
        <taxon>Chlorobiota</taxon>
        <taxon>Chlorobiia</taxon>
        <taxon>Chlorobiales</taxon>
        <taxon>Chloroherpetonaceae</taxon>
        <taxon>Chloroherpeton</taxon>
    </lineage>
</organism>
<proteinExistence type="inferred from homology"/>
<comment type="function">
    <text evidence="1">Succinyl-CoA synthetase functions in the citric acid cycle (TCA), coupling the hydrolysis of succinyl-CoA to the synthesis of either ATP or GTP and thus represents the only step of substrate-level phosphorylation in the TCA. The beta subunit provides nucleotide specificity of the enzyme and binds the substrate succinate, while the binding sites for coenzyme A and phosphate are found in the alpha subunit.</text>
</comment>
<comment type="catalytic activity">
    <reaction evidence="1">
        <text>succinate + ATP + CoA = succinyl-CoA + ADP + phosphate</text>
        <dbReference type="Rhea" id="RHEA:17661"/>
        <dbReference type="ChEBI" id="CHEBI:30031"/>
        <dbReference type="ChEBI" id="CHEBI:30616"/>
        <dbReference type="ChEBI" id="CHEBI:43474"/>
        <dbReference type="ChEBI" id="CHEBI:57287"/>
        <dbReference type="ChEBI" id="CHEBI:57292"/>
        <dbReference type="ChEBI" id="CHEBI:456216"/>
        <dbReference type="EC" id="6.2.1.5"/>
    </reaction>
    <physiologicalReaction direction="right-to-left" evidence="1">
        <dbReference type="Rhea" id="RHEA:17663"/>
    </physiologicalReaction>
</comment>
<comment type="catalytic activity">
    <reaction evidence="1">
        <text>GTP + succinate + CoA = succinyl-CoA + GDP + phosphate</text>
        <dbReference type="Rhea" id="RHEA:22120"/>
        <dbReference type="ChEBI" id="CHEBI:30031"/>
        <dbReference type="ChEBI" id="CHEBI:37565"/>
        <dbReference type="ChEBI" id="CHEBI:43474"/>
        <dbReference type="ChEBI" id="CHEBI:57287"/>
        <dbReference type="ChEBI" id="CHEBI:57292"/>
        <dbReference type="ChEBI" id="CHEBI:58189"/>
    </reaction>
    <physiologicalReaction direction="right-to-left" evidence="1">
        <dbReference type="Rhea" id="RHEA:22122"/>
    </physiologicalReaction>
</comment>
<comment type="cofactor">
    <cofactor evidence="1">
        <name>Mg(2+)</name>
        <dbReference type="ChEBI" id="CHEBI:18420"/>
    </cofactor>
    <text evidence="1">Binds 1 Mg(2+) ion per subunit.</text>
</comment>
<comment type="pathway">
    <text evidence="1">Carbohydrate metabolism; tricarboxylic acid cycle; succinate from succinyl-CoA (ligase route): step 1/1.</text>
</comment>
<comment type="subunit">
    <text evidence="1">Heterotetramer of two alpha and two beta subunits.</text>
</comment>
<comment type="similarity">
    <text evidence="1">Belongs to the succinate/malate CoA ligase beta subunit family.</text>
</comment>
<accession>B3QWF8</accession>
<gene>
    <name evidence="1" type="primary">sucC</name>
    <name type="ordered locus">Ctha_2267</name>
</gene>